<protein>
    <recommendedName>
        <fullName evidence="1">Indole-3-glycerol phosphate synthase</fullName>
        <shortName evidence="1">IGPS</shortName>
        <ecNumber evidence="1">4.1.1.48</ecNumber>
    </recommendedName>
</protein>
<sequence>MSDILDKIIAVKREEIAAALESAPLEELKVQASARDSRDFVGALRDKHAAGHAAVIAEVKKASPSKGVLREHFVPADIARSYAQHGAACLSVLTDERFFQGSARYLEQARAACTLPVLRKDFIVDAYQLLEARAMGADAILLIAAALDTPLMIDLEAYAHSLGLAVLVEVHNRGELDEALKLKTPFVGINNRNLRTFETTIDTTLGMLDAIPDDRIVVTESGILSRADVERMEAAGVHTFLVGEAFMRAENPGAELARMFF</sequence>
<feature type="chain" id="PRO_1000018456" description="Indole-3-glycerol phosphate synthase">
    <location>
        <begin position="1"/>
        <end position="261"/>
    </location>
</feature>
<comment type="catalytic activity">
    <reaction evidence="1">
        <text>1-(2-carboxyphenylamino)-1-deoxy-D-ribulose 5-phosphate + H(+) = (1S,2R)-1-C-(indol-3-yl)glycerol 3-phosphate + CO2 + H2O</text>
        <dbReference type="Rhea" id="RHEA:23476"/>
        <dbReference type="ChEBI" id="CHEBI:15377"/>
        <dbReference type="ChEBI" id="CHEBI:15378"/>
        <dbReference type="ChEBI" id="CHEBI:16526"/>
        <dbReference type="ChEBI" id="CHEBI:58613"/>
        <dbReference type="ChEBI" id="CHEBI:58866"/>
        <dbReference type="EC" id="4.1.1.48"/>
    </reaction>
</comment>
<comment type="pathway">
    <text evidence="1">Amino-acid biosynthesis; L-tryptophan biosynthesis; L-tryptophan from chorismate: step 4/5.</text>
</comment>
<comment type="similarity">
    <text evidence="1">Belongs to the TrpC family.</text>
</comment>
<proteinExistence type="inferred from homology"/>
<evidence type="ECO:0000255" key="1">
    <source>
        <dbReference type="HAMAP-Rule" id="MF_00134"/>
    </source>
</evidence>
<dbReference type="EC" id="4.1.1.48" evidence="1"/>
<dbReference type="EMBL" id="CP000011">
    <property type="protein sequence ID" value="AAU46885.1"/>
    <property type="molecule type" value="Genomic_DNA"/>
</dbReference>
<dbReference type="RefSeq" id="WP_004186826.1">
    <property type="nucleotide sequence ID" value="NC_006349.2"/>
</dbReference>
<dbReference type="RefSeq" id="YP_105298.1">
    <property type="nucleotide sequence ID" value="NC_006349.2"/>
</dbReference>
<dbReference type="SMR" id="Q62DD0"/>
<dbReference type="GeneID" id="92976776"/>
<dbReference type="KEGG" id="bma:BMAA0530"/>
<dbReference type="PATRIC" id="fig|243160.12.peg.4040"/>
<dbReference type="eggNOG" id="COG0134">
    <property type="taxonomic scope" value="Bacteria"/>
</dbReference>
<dbReference type="HOGENOM" id="CLU_034247_2_0_4"/>
<dbReference type="UniPathway" id="UPA00035">
    <property type="reaction ID" value="UER00043"/>
</dbReference>
<dbReference type="Proteomes" id="UP000006693">
    <property type="component" value="Chromosome 2"/>
</dbReference>
<dbReference type="GO" id="GO:0004425">
    <property type="term" value="F:indole-3-glycerol-phosphate synthase activity"/>
    <property type="evidence" value="ECO:0007669"/>
    <property type="project" value="UniProtKB-UniRule"/>
</dbReference>
<dbReference type="GO" id="GO:0004640">
    <property type="term" value="F:phosphoribosylanthranilate isomerase activity"/>
    <property type="evidence" value="ECO:0007669"/>
    <property type="project" value="TreeGrafter"/>
</dbReference>
<dbReference type="GO" id="GO:0000162">
    <property type="term" value="P:L-tryptophan biosynthetic process"/>
    <property type="evidence" value="ECO:0007669"/>
    <property type="project" value="UniProtKB-UniRule"/>
</dbReference>
<dbReference type="CDD" id="cd00331">
    <property type="entry name" value="IGPS"/>
    <property type="match status" value="1"/>
</dbReference>
<dbReference type="FunFam" id="3.20.20.70:FF:000024">
    <property type="entry name" value="Indole-3-glycerol phosphate synthase"/>
    <property type="match status" value="1"/>
</dbReference>
<dbReference type="Gene3D" id="3.20.20.70">
    <property type="entry name" value="Aldolase class I"/>
    <property type="match status" value="1"/>
</dbReference>
<dbReference type="HAMAP" id="MF_00134_B">
    <property type="entry name" value="IGPS_B"/>
    <property type="match status" value="1"/>
</dbReference>
<dbReference type="InterPro" id="IPR013785">
    <property type="entry name" value="Aldolase_TIM"/>
</dbReference>
<dbReference type="InterPro" id="IPR045186">
    <property type="entry name" value="Indole-3-glycerol_P_synth"/>
</dbReference>
<dbReference type="InterPro" id="IPR013798">
    <property type="entry name" value="Indole-3-glycerol_P_synth_dom"/>
</dbReference>
<dbReference type="InterPro" id="IPR001468">
    <property type="entry name" value="Indole-3-GlycerolPSynthase_CS"/>
</dbReference>
<dbReference type="InterPro" id="IPR011060">
    <property type="entry name" value="RibuloseP-bd_barrel"/>
</dbReference>
<dbReference type="NCBIfam" id="NF001373">
    <property type="entry name" value="PRK00278.1-6"/>
    <property type="match status" value="1"/>
</dbReference>
<dbReference type="NCBIfam" id="NF001377">
    <property type="entry name" value="PRK00278.2-4"/>
    <property type="match status" value="1"/>
</dbReference>
<dbReference type="PANTHER" id="PTHR22854:SF2">
    <property type="entry name" value="INDOLE-3-GLYCEROL-PHOSPHATE SYNTHASE"/>
    <property type="match status" value="1"/>
</dbReference>
<dbReference type="PANTHER" id="PTHR22854">
    <property type="entry name" value="TRYPTOPHAN BIOSYNTHESIS PROTEIN"/>
    <property type="match status" value="1"/>
</dbReference>
<dbReference type="Pfam" id="PF00218">
    <property type="entry name" value="IGPS"/>
    <property type="match status" value="1"/>
</dbReference>
<dbReference type="SUPFAM" id="SSF51366">
    <property type="entry name" value="Ribulose-phoshate binding barrel"/>
    <property type="match status" value="1"/>
</dbReference>
<dbReference type="PROSITE" id="PS00614">
    <property type="entry name" value="IGPS"/>
    <property type="match status" value="1"/>
</dbReference>
<gene>
    <name evidence="1" type="primary">trpC</name>
    <name type="ordered locus">BMAA0530</name>
</gene>
<organism>
    <name type="scientific">Burkholderia mallei (strain ATCC 23344)</name>
    <dbReference type="NCBI Taxonomy" id="243160"/>
    <lineage>
        <taxon>Bacteria</taxon>
        <taxon>Pseudomonadati</taxon>
        <taxon>Pseudomonadota</taxon>
        <taxon>Betaproteobacteria</taxon>
        <taxon>Burkholderiales</taxon>
        <taxon>Burkholderiaceae</taxon>
        <taxon>Burkholderia</taxon>
        <taxon>pseudomallei group</taxon>
    </lineage>
</organism>
<name>TRPC_BURMA</name>
<reference key="1">
    <citation type="journal article" date="2004" name="Proc. Natl. Acad. Sci. U.S.A.">
        <title>Structural flexibility in the Burkholderia mallei genome.</title>
        <authorList>
            <person name="Nierman W.C."/>
            <person name="DeShazer D."/>
            <person name="Kim H.S."/>
            <person name="Tettelin H."/>
            <person name="Nelson K.E."/>
            <person name="Feldblyum T.V."/>
            <person name="Ulrich R.L."/>
            <person name="Ronning C.M."/>
            <person name="Brinkac L.M."/>
            <person name="Daugherty S.C."/>
            <person name="Davidsen T.D."/>
            <person name="DeBoy R.T."/>
            <person name="Dimitrov G."/>
            <person name="Dodson R.J."/>
            <person name="Durkin A.S."/>
            <person name="Gwinn M.L."/>
            <person name="Haft D.H."/>
            <person name="Khouri H.M."/>
            <person name="Kolonay J.F."/>
            <person name="Madupu R."/>
            <person name="Mohammoud Y."/>
            <person name="Nelson W.C."/>
            <person name="Radune D."/>
            <person name="Romero C.M."/>
            <person name="Sarria S."/>
            <person name="Selengut J."/>
            <person name="Shamblin C."/>
            <person name="Sullivan S.A."/>
            <person name="White O."/>
            <person name="Yu Y."/>
            <person name="Zafar N."/>
            <person name="Zhou L."/>
            <person name="Fraser C.M."/>
        </authorList>
    </citation>
    <scope>NUCLEOTIDE SEQUENCE [LARGE SCALE GENOMIC DNA]</scope>
    <source>
        <strain>ATCC 23344</strain>
    </source>
</reference>
<keyword id="KW-0028">Amino-acid biosynthesis</keyword>
<keyword id="KW-0057">Aromatic amino acid biosynthesis</keyword>
<keyword id="KW-0210">Decarboxylase</keyword>
<keyword id="KW-0456">Lyase</keyword>
<keyword id="KW-1185">Reference proteome</keyword>
<keyword id="KW-0822">Tryptophan biosynthesis</keyword>
<accession>Q62DD0</accession>